<name>ZSC21_GORGO</name>
<comment type="function">
    <text evidence="1">Strong transcriptional activator (By similarity). Plays an important role in spermatogenesis; essential for the progression of meiotic prophase I in spermatocytes (By similarity).</text>
</comment>
<comment type="subcellular location">
    <subcellularLocation>
        <location evidence="4">Nucleus</location>
    </subcellularLocation>
</comment>
<comment type="similarity">
    <text evidence="6">Belongs to the krueppel C2H2-type zinc-finger protein family.</text>
</comment>
<keyword id="KW-0010">Activator</keyword>
<keyword id="KW-0221">Differentiation</keyword>
<keyword id="KW-0238">DNA-binding</keyword>
<keyword id="KW-1017">Isopeptide bond</keyword>
<keyword id="KW-0469">Meiosis</keyword>
<keyword id="KW-0479">Metal-binding</keyword>
<keyword id="KW-0539">Nucleus</keyword>
<keyword id="KW-1185">Reference proteome</keyword>
<keyword id="KW-0677">Repeat</keyword>
<keyword id="KW-0744">Spermatogenesis</keyword>
<keyword id="KW-0804">Transcription</keyword>
<keyword id="KW-0805">Transcription regulation</keyword>
<keyword id="KW-0832">Ubl conjugation</keyword>
<keyword id="KW-0862">Zinc</keyword>
<keyword id="KW-0863">Zinc-finger</keyword>
<reference key="1">
    <citation type="submission" date="2006-08" db="EMBL/GenBank/DDBJ databases">
        <title>Positive selection in transcription factor genes on the human lineage.</title>
        <authorList>
            <person name="Nickel G.C."/>
            <person name="Tefft D.L."/>
            <person name="Trevarthen K."/>
            <person name="Funt J."/>
            <person name="Adams M.D."/>
        </authorList>
    </citation>
    <scope>NUCLEOTIDE SEQUENCE [GENOMIC DNA]</scope>
</reference>
<dbReference type="EMBL" id="DQ976474">
    <property type="protein sequence ID" value="ABM46677.1"/>
    <property type="molecule type" value="Genomic_DNA"/>
</dbReference>
<dbReference type="RefSeq" id="XP_018886261.3">
    <property type="nucleotide sequence ID" value="XM_019030716.4"/>
</dbReference>
<dbReference type="RefSeq" id="XP_018886264.3">
    <property type="nucleotide sequence ID" value="XM_019030719.4"/>
</dbReference>
<dbReference type="RefSeq" id="XP_055249073.1">
    <property type="nucleotide sequence ID" value="XM_055393098.2"/>
</dbReference>
<dbReference type="RefSeq" id="XP_055249074.1">
    <property type="nucleotide sequence ID" value="XM_055393099.2"/>
</dbReference>
<dbReference type="RefSeq" id="XP_055249076.1">
    <property type="nucleotide sequence ID" value="XM_055393101.2"/>
</dbReference>
<dbReference type="RefSeq" id="XP_055249077.1">
    <property type="nucleotide sequence ID" value="XM_055393102.2"/>
</dbReference>
<dbReference type="RefSeq" id="XP_055249079.1">
    <property type="nucleotide sequence ID" value="XM_055393104.2"/>
</dbReference>
<dbReference type="RefSeq" id="XP_055249080.1">
    <property type="nucleotide sequence ID" value="XM_055393105.2"/>
</dbReference>
<dbReference type="RefSeq" id="XP_055249081.1">
    <property type="nucleotide sequence ID" value="XM_055393106.2"/>
</dbReference>
<dbReference type="RefSeq" id="XP_055249082.1">
    <property type="nucleotide sequence ID" value="XM_055393107.2"/>
</dbReference>
<dbReference type="RefSeq" id="XP_055249083.1">
    <property type="nucleotide sequence ID" value="XM_055393108.2"/>
</dbReference>
<dbReference type="RefSeq" id="XP_055249084.1">
    <property type="nucleotide sequence ID" value="XM_055393109.2"/>
</dbReference>
<dbReference type="RefSeq" id="XP_063564683.1">
    <property type="nucleotide sequence ID" value="XM_063708613.1"/>
</dbReference>
<dbReference type="RefSeq" id="XP_063564684.1">
    <property type="nucleotide sequence ID" value="XM_063708614.1"/>
</dbReference>
<dbReference type="RefSeq" id="XP_063564685.1">
    <property type="nucleotide sequence ID" value="XM_063708615.1"/>
</dbReference>
<dbReference type="RefSeq" id="XP_063564686.1">
    <property type="nucleotide sequence ID" value="XM_063708616.1"/>
</dbReference>
<dbReference type="RefSeq" id="XP_063564687.1">
    <property type="nucleotide sequence ID" value="XM_063708617.1"/>
</dbReference>
<dbReference type="SMR" id="A1YEV9"/>
<dbReference type="STRING" id="9593.ENSGGOP00000011164"/>
<dbReference type="GeneID" id="101153857"/>
<dbReference type="eggNOG" id="KOG1721">
    <property type="taxonomic scope" value="Eukaryota"/>
</dbReference>
<dbReference type="InParanoid" id="A1YEV9"/>
<dbReference type="Proteomes" id="UP000001519">
    <property type="component" value="Unplaced"/>
</dbReference>
<dbReference type="GO" id="GO:0005634">
    <property type="term" value="C:nucleus"/>
    <property type="evidence" value="ECO:0007669"/>
    <property type="project" value="UniProtKB-SubCell"/>
</dbReference>
<dbReference type="GO" id="GO:0000981">
    <property type="term" value="F:DNA-binding transcription factor activity, RNA polymerase II-specific"/>
    <property type="evidence" value="ECO:0000318"/>
    <property type="project" value="GO_Central"/>
</dbReference>
<dbReference type="GO" id="GO:0000978">
    <property type="term" value="F:RNA polymerase II cis-regulatory region sequence-specific DNA binding"/>
    <property type="evidence" value="ECO:0000318"/>
    <property type="project" value="GO_Central"/>
</dbReference>
<dbReference type="GO" id="GO:0008270">
    <property type="term" value="F:zinc ion binding"/>
    <property type="evidence" value="ECO:0007669"/>
    <property type="project" value="UniProtKB-KW"/>
</dbReference>
<dbReference type="GO" id="GO:0030154">
    <property type="term" value="P:cell differentiation"/>
    <property type="evidence" value="ECO:0007669"/>
    <property type="project" value="UniProtKB-KW"/>
</dbReference>
<dbReference type="GO" id="GO:0007141">
    <property type="term" value="P:male meiosis I"/>
    <property type="evidence" value="ECO:0000250"/>
    <property type="project" value="UniProtKB"/>
</dbReference>
<dbReference type="GO" id="GO:0006357">
    <property type="term" value="P:regulation of transcription by RNA polymerase II"/>
    <property type="evidence" value="ECO:0000318"/>
    <property type="project" value="GO_Central"/>
</dbReference>
<dbReference type="GO" id="GO:0007283">
    <property type="term" value="P:spermatogenesis"/>
    <property type="evidence" value="ECO:0000250"/>
    <property type="project" value="UniProtKB"/>
</dbReference>
<dbReference type="CDD" id="cd07936">
    <property type="entry name" value="SCAN"/>
    <property type="match status" value="1"/>
</dbReference>
<dbReference type="FunFam" id="3.30.160.60:FF:000172">
    <property type="entry name" value="Zinc finger and SCAN domain containing 21"/>
    <property type="match status" value="2"/>
</dbReference>
<dbReference type="FunFam" id="3.30.160.60:FF:000151">
    <property type="entry name" value="Zinc finger and SCAN domain-containing 21"/>
    <property type="match status" value="1"/>
</dbReference>
<dbReference type="FunFam" id="3.30.160.60:FF:000467">
    <property type="entry name" value="Zinc finger and SCAN domain-containing 21"/>
    <property type="match status" value="1"/>
</dbReference>
<dbReference type="FunFam" id="3.30.160.60:FF:000955">
    <property type="entry name" value="Zinc finger and SCAN domain-containing protein 21"/>
    <property type="match status" value="1"/>
</dbReference>
<dbReference type="FunFam" id="3.30.160.60:FF:001047">
    <property type="entry name" value="Zinc finger and SCAN domain-containing protein 21"/>
    <property type="match status" value="1"/>
</dbReference>
<dbReference type="FunFam" id="1.10.4020.10:FF:000001">
    <property type="entry name" value="zinc finger protein 263 isoform X1"/>
    <property type="match status" value="1"/>
</dbReference>
<dbReference type="FunFam" id="3.30.160.60:FF:002343">
    <property type="entry name" value="Zinc finger protein 33A"/>
    <property type="match status" value="1"/>
</dbReference>
<dbReference type="Gene3D" id="3.30.160.60">
    <property type="entry name" value="Classic Zinc Finger"/>
    <property type="match status" value="7"/>
</dbReference>
<dbReference type="Gene3D" id="1.10.4020.10">
    <property type="entry name" value="DNA breaking-rejoining enzymes"/>
    <property type="match status" value="1"/>
</dbReference>
<dbReference type="InterPro" id="IPR003309">
    <property type="entry name" value="SCAN_dom"/>
</dbReference>
<dbReference type="InterPro" id="IPR038269">
    <property type="entry name" value="SCAN_sf"/>
</dbReference>
<dbReference type="InterPro" id="IPR036236">
    <property type="entry name" value="Znf_C2H2_sf"/>
</dbReference>
<dbReference type="InterPro" id="IPR013087">
    <property type="entry name" value="Znf_C2H2_type"/>
</dbReference>
<dbReference type="PANTHER" id="PTHR23226">
    <property type="entry name" value="ZINC FINGER AND SCAN DOMAIN-CONTAINING"/>
    <property type="match status" value="1"/>
</dbReference>
<dbReference type="PANTHER" id="PTHR23226:SF366">
    <property type="entry name" value="ZINC FINGER PROTEIN ZFP2"/>
    <property type="match status" value="1"/>
</dbReference>
<dbReference type="Pfam" id="PF02023">
    <property type="entry name" value="SCAN"/>
    <property type="match status" value="1"/>
</dbReference>
<dbReference type="Pfam" id="PF00096">
    <property type="entry name" value="zf-C2H2"/>
    <property type="match status" value="5"/>
</dbReference>
<dbReference type="Pfam" id="PF13465">
    <property type="entry name" value="zf-H2C2_2"/>
    <property type="match status" value="1"/>
</dbReference>
<dbReference type="SMART" id="SM00431">
    <property type="entry name" value="SCAN"/>
    <property type="match status" value="1"/>
</dbReference>
<dbReference type="SMART" id="SM00355">
    <property type="entry name" value="ZnF_C2H2"/>
    <property type="match status" value="7"/>
</dbReference>
<dbReference type="SUPFAM" id="SSF57667">
    <property type="entry name" value="beta-beta-alpha zinc fingers"/>
    <property type="match status" value="4"/>
</dbReference>
<dbReference type="SUPFAM" id="SSF47353">
    <property type="entry name" value="Retrovirus capsid dimerization domain-like"/>
    <property type="match status" value="1"/>
</dbReference>
<dbReference type="PROSITE" id="PS50804">
    <property type="entry name" value="SCAN_BOX"/>
    <property type="match status" value="1"/>
</dbReference>
<dbReference type="PROSITE" id="PS00028">
    <property type="entry name" value="ZINC_FINGER_C2H2_1"/>
    <property type="match status" value="6"/>
</dbReference>
<dbReference type="PROSITE" id="PS50157">
    <property type="entry name" value="ZINC_FINGER_C2H2_2"/>
    <property type="match status" value="7"/>
</dbReference>
<accession>A1YEV9</accession>
<evidence type="ECO:0000250" key="1">
    <source>
        <dbReference type="UniProtKB" id="Q07231"/>
    </source>
</evidence>
<evidence type="ECO:0000250" key="2">
    <source>
        <dbReference type="UniProtKB" id="Q9Y5A6"/>
    </source>
</evidence>
<evidence type="ECO:0000255" key="3">
    <source>
        <dbReference type="PROSITE-ProRule" id="PRU00042"/>
    </source>
</evidence>
<evidence type="ECO:0000255" key="4">
    <source>
        <dbReference type="PROSITE-ProRule" id="PRU00187"/>
    </source>
</evidence>
<evidence type="ECO:0000256" key="5">
    <source>
        <dbReference type="SAM" id="MobiDB-lite"/>
    </source>
</evidence>
<evidence type="ECO:0000305" key="6"/>
<protein>
    <recommendedName>
        <fullName>Zinc finger and SCAN domain-containing protein 21</fullName>
    </recommendedName>
</protein>
<organism>
    <name type="scientific">Gorilla gorilla gorilla</name>
    <name type="common">Western lowland gorilla</name>
    <dbReference type="NCBI Taxonomy" id="9595"/>
    <lineage>
        <taxon>Eukaryota</taxon>
        <taxon>Metazoa</taxon>
        <taxon>Chordata</taxon>
        <taxon>Craniata</taxon>
        <taxon>Vertebrata</taxon>
        <taxon>Euteleostomi</taxon>
        <taxon>Mammalia</taxon>
        <taxon>Eutheria</taxon>
        <taxon>Euarchontoglires</taxon>
        <taxon>Primates</taxon>
        <taxon>Haplorrhini</taxon>
        <taxon>Catarrhini</taxon>
        <taxon>Hominidae</taxon>
        <taxon>Gorilla</taxon>
    </lineage>
</organism>
<sequence length="473" mass="53716">MMTKVLGMAPVLGPRPPQEQVGPLMVKVEEKEEKGKYLPSLEMFRQRFRQFGYHDTPGPREALSQLRVLCCEWLRPEIHTKEQILELLVLEQFLTILPQELQAWVQEHCPESAEEAVTLLEDLERELDEPGHQVSTPPNEQKPVWEKISSSGTAKESPSSMQPQPLETSHNYESWGPLYIQESGEEQEFAQDPRKVRDCRLSTQHEESADEQKGSEAEGLKEDIISVIIANKPEASLERQCVNLENEKGTKPPLQEAGSKKGRESVPTKPTPGERRYICAECGKAFSNSSNLTKHRRTHTGEKPYVCTKCGKAFSHSSNLTLHYRTHLVDRPYDCKCGKAFGQSSDLLKHQRMHTEEAPYQCKDCGKAFSGKGSLIRHYRIHTGEKPYQCNECGKSFSQHAGLSSHQRLHTGEKPYKCKECGKAFNHSSNFNKHHRIHTGEKPYWCHHCGKTFCSKSNLSKHQRVHTGEGEAP</sequence>
<feature type="chain" id="PRO_0000285487" description="Zinc finger and SCAN domain-containing protein 21">
    <location>
        <begin position="1"/>
        <end position="473"/>
    </location>
</feature>
<feature type="domain" description="SCAN box" evidence="4">
    <location>
        <begin position="45"/>
        <end position="127"/>
    </location>
</feature>
<feature type="zinc finger region" description="C2H2-type 1" evidence="3">
    <location>
        <begin position="277"/>
        <end position="299"/>
    </location>
</feature>
<feature type="zinc finger region" description="C2H2-type 2" evidence="3">
    <location>
        <begin position="305"/>
        <end position="327"/>
    </location>
</feature>
<feature type="zinc finger region" description="C2H2-type 3" evidence="3">
    <location>
        <begin position="333"/>
        <end position="354"/>
    </location>
</feature>
<feature type="zinc finger region" description="C2H2-type 4" evidence="3">
    <location>
        <begin position="360"/>
        <end position="382"/>
    </location>
</feature>
<feature type="zinc finger region" description="C2H2-type 5" evidence="3">
    <location>
        <begin position="388"/>
        <end position="410"/>
    </location>
</feature>
<feature type="zinc finger region" description="C2H2-type 6" evidence="3">
    <location>
        <begin position="416"/>
        <end position="438"/>
    </location>
</feature>
<feature type="zinc finger region" description="C2H2-type 7" evidence="3">
    <location>
        <begin position="444"/>
        <end position="466"/>
    </location>
</feature>
<feature type="region of interest" description="Disordered" evidence="5">
    <location>
        <begin position="127"/>
        <end position="171"/>
    </location>
</feature>
<feature type="region of interest" description="Disordered" evidence="5">
    <location>
        <begin position="244"/>
        <end position="272"/>
    </location>
</feature>
<feature type="compositionally biased region" description="Polar residues" evidence="5">
    <location>
        <begin position="148"/>
        <end position="171"/>
    </location>
</feature>
<feature type="compositionally biased region" description="Basic and acidic residues" evidence="5">
    <location>
        <begin position="258"/>
        <end position="272"/>
    </location>
</feature>
<feature type="cross-link" description="Glycyl lysine isopeptide (Lys-Gly) (interchain with G-Cter in SUMO2)" evidence="2">
    <location>
        <position position="27"/>
    </location>
</feature>
<feature type="cross-link" description="Glycyl lysine isopeptide (Lys-Gly) (interchain with G-Cter in SUMO2)" evidence="2">
    <location>
        <position position="221"/>
    </location>
</feature>
<feature type="cross-link" description="Glycyl lysine isopeptide (Lys-Gly) (interchain with G-Cter in SUMO2)" evidence="2">
    <location>
        <position position="232"/>
    </location>
</feature>
<feature type="cross-link" description="Glycyl lysine isopeptide (Lys-Gly) (interchain with G-Cter in SUMO2)" evidence="2">
    <location>
        <position position="349"/>
    </location>
</feature>
<proteinExistence type="inferred from homology"/>
<gene>
    <name type="primary">ZSCAN21</name>
</gene>